<accession>B7NNT5</accession>
<name>ARND_ECO7I</name>
<reference key="1">
    <citation type="journal article" date="2009" name="PLoS Genet.">
        <title>Organised genome dynamics in the Escherichia coli species results in highly diverse adaptive paths.</title>
        <authorList>
            <person name="Touchon M."/>
            <person name="Hoede C."/>
            <person name="Tenaillon O."/>
            <person name="Barbe V."/>
            <person name="Baeriswyl S."/>
            <person name="Bidet P."/>
            <person name="Bingen E."/>
            <person name="Bonacorsi S."/>
            <person name="Bouchier C."/>
            <person name="Bouvet O."/>
            <person name="Calteau A."/>
            <person name="Chiapello H."/>
            <person name="Clermont O."/>
            <person name="Cruveiller S."/>
            <person name="Danchin A."/>
            <person name="Diard M."/>
            <person name="Dossat C."/>
            <person name="Karoui M.E."/>
            <person name="Frapy E."/>
            <person name="Garry L."/>
            <person name="Ghigo J.M."/>
            <person name="Gilles A.M."/>
            <person name="Johnson J."/>
            <person name="Le Bouguenec C."/>
            <person name="Lescat M."/>
            <person name="Mangenot S."/>
            <person name="Martinez-Jehanne V."/>
            <person name="Matic I."/>
            <person name="Nassif X."/>
            <person name="Oztas S."/>
            <person name="Petit M.A."/>
            <person name="Pichon C."/>
            <person name="Rouy Z."/>
            <person name="Ruf C.S."/>
            <person name="Schneider D."/>
            <person name="Tourret J."/>
            <person name="Vacherie B."/>
            <person name="Vallenet D."/>
            <person name="Medigue C."/>
            <person name="Rocha E.P.C."/>
            <person name="Denamur E."/>
        </authorList>
    </citation>
    <scope>NUCLEOTIDE SEQUENCE [LARGE SCALE GENOMIC DNA]</scope>
    <source>
        <strain>IAI39 / ExPEC</strain>
    </source>
</reference>
<keyword id="KW-0046">Antibiotic resistance</keyword>
<keyword id="KW-0378">Hydrolase</keyword>
<keyword id="KW-0441">Lipid A biosynthesis</keyword>
<keyword id="KW-0444">Lipid biosynthesis</keyword>
<keyword id="KW-0443">Lipid metabolism</keyword>
<keyword id="KW-0448">Lipopolysaccharide biosynthesis</keyword>
<evidence type="ECO:0000255" key="1">
    <source>
        <dbReference type="HAMAP-Rule" id="MF_01870"/>
    </source>
</evidence>
<comment type="function">
    <text evidence="1">Catalyzes the deformylation of 4-deoxy-4-formamido-L-arabinose-phosphoundecaprenol to 4-amino-4-deoxy-L-arabinose-phosphoundecaprenol. The modified arabinose is attached to lipid A and is required for resistance to polymyxin and cationic antimicrobial peptides.</text>
</comment>
<comment type="catalytic activity">
    <reaction evidence="1">
        <text>4-deoxy-4-formamido-alpha-L-arabinopyranosyl di-trans,octa-cis-undecaprenyl phosphate + H2O = 4-amino-4-deoxy-alpha-L-arabinopyranosyl di-trans,octa-cis-undecaprenyl phosphate + formate</text>
        <dbReference type="Rhea" id="RHEA:27734"/>
        <dbReference type="ChEBI" id="CHEBI:15377"/>
        <dbReference type="ChEBI" id="CHEBI:15740"/>
        <dbReference type="ChEBI" id="CHEBI:58909"/>
        <dbReference type="ChEBI" id="CHEBI:60463"/>
        <dbReference type="EC" id="3.5.1.n3"/>
    </reaction>
</comment>
<comment type="pathway">
    <text evidence="1">Glycolipid biosynthesis; 4-amino-4-deoxy-alpha-L-arabinose undecaprenyl phosphate biosynthesis; 4-amino-4-deoxy-alpha-L-arabinose undecaprenyl phosphate from UDP-4-deoxy-4-formamido-beta-L-arabinose and undecaprenyl phosphate: step 2/2.</text>
</comment>
<comment type="pathway">
    <text evidence="1">Bacterial outer membrane biogenesis; lipopolysaccharide biosynthesis.</text>
</comment>
<comment type="similarity">
    <text evidence="1">Belongs to the polysaccharide deacetylase family. ArnD deformylase subfamily.</text>
</comment>
<dbReference type="EC" id="3.5.1.n3" evidence="1"/>
<dbReference type="EMBL" id="CU928164">
    <property type="protein sequence ID" value="CAR18529.1"/>
    <property type="molecule type" value="Genomic_DNA"/>
</dbReference>
<dbReference type="RefSeq" id="WP_000169756.1">
    <property type="nucleotide sequence ID" value="NC_011750.1"/>
</dbReference>
<dbReference type="RefSeq" id="YP_002408359.1">
    <property type="nucleotide sequence ID" value="NC_011750.1"/>
</dbReference>
<dbReference type="SMR" id="B7NNT5"/>
<dbReference type="STRING" id="585057.ECIAI39_2403"/>
<dbReference type="KEGG" id="ect:ECIAI39_2403"/>
<dbReference type="PATRIC" id="fig|585057.6.peg.2505"/>
<dbReference type="HOGENOM" id="CLU_084199_0_0_6"/>
<dbReference type="UniPathway" id="UPA00030"/>
<dbReference type="UniPathway" id="UPA00036">
    <property type="reaction ID" value="UER00496"/>
</dbReference>
<dbReference type="Proteomes" id="UP000000749">
    <property type="component" value="Chromosome"/>
</dbReference>
<dbReference type="GO" id="GO:0016020">
    <property type="term" value="C:membrane"/>
    <property type="evidence" value="ECO:0007669"/>
    <property type="project" value="GOC"/>
</dbReference>
<dbReference type="GO" id="GO:0016811">
    <property type="term" value="F:hydrolase activity, acting on carbon-nitrogen (but not peptide) bonds, in linear amides"/>
    <property type="evidence" value="ECO:0007669"/>
    <property type="project" value="UniProtKB-UniRule"/>
</dbReference>
<dbReference type="GO" id="GO:0036108">
    <property type="term" value="P:4-amino-4-deoxy-alpha-L-arabinopyranosyl undecaprenyl phosphate biosynthetic process"/>
    <property type="evidence" value="ECO:0007669"/>
    <property type="project" value="UniProtKB-UniRule"/>
</dbReference>
<dbReference type="GO" id="GO:0009245">
    <property type="term" value="P:lipid A biosynthetic process"/>
    <property type="evidence" value="ECO:0007669"/>
    <property type="project" value="UniProtKB-UniRule"/>
</dbReference>
<dbReference type="GO" id="GO:0009103">
    <property type="term" value="P:lipopolysaccharide biosynthetic process"/>
    <property type="evidence" value="ECO:0007669"/>
    <property type="project" value="UniProtKB-UniRule"/>
</dbReference>
<dbReference type="GO" id="GO:0046677">
    <property type="term" value="P:response to antibiotic"/>
    <property type="evidence" value="ECO:0007669"/>
    <property type="project" value="UniProtKB-KW"/>
</dbReference>
<dbReference type="CDD" id="cd10939">
    <property type="entry name" value="CE4_ArnD"/>
    <property type="match status" value="1"/>
</dbReference>
<dbReference type="Gene3D" id="3.20.20.370">
    <property type="entry name" value="Glycoside hydrolase/deacetylase"/>
    <property type="match status" value="1"/>
</dbReference>
<dbReference type="HAMAP" id="MF_01870">
    <property type="entry name" value="ArnD"/>
    <property type="match status" value="1"/>
</dbReference>
<dbReference type="InterPro" id="IPR023557">
    <property type="entry name" value="ArnD"/>
</dbReference>
<dbReference type="InterPro" id="IPR011330">
    <property type="entry name" value="Glyco_hydro/deAcase_b/a-brl"/>
</dbReference>
<dbReference type="InterPro" id="IPR002509">
    <property type="entry name" value="NODB_dom"/>
</dbReference>
<dbReference type="InterPro" id="IPR050248">
    <property type="entry name" value="Polysacc_deacetylase_ArnD"/>
</dbReference>
<dbReference type="NCBIfam" id="NF011923">
    <property type="entry name" value="PRK15394.1"/>
    <property type="match status" value="1"/>
</dbReference>
<dbReference type="PANTHER" id="PTHR10587:SF137">
    <property type="entry name" value="4-DEOXY-4-FORMAMIDO-L-ARABINOSE-PHOSPHOUNDECAPRENOL DEFORMYLASE ARND-RELATED"/>
    <property type="match status" value="1"/>
</dbReference>
<dbReference type="PANTHER" id="PTHR10587">
    <property type="entry name" value="GLYCOSYL TRANSFERASE-RELATED"/>
    <property type="match status" value="1"/>
</dbReference>
<dbReference type="Pfam" id="PF01522">
    <property type="entry name" value="Polysacc_deac_1"/>
    <property type="match status" value="1"/>
</dbReference>
<dbReference type="SUPFAM" id="SSF88713">
    <property type="entry name" value="Glycoside hydrolase/deacetylase"/>
    <property type="match status" value="1"/>
</dbReference>
<dbReference type="PROSITE" id="PS51677">
    <property type="entry name" value="NODB"/>
    <property type="match status" value="1"/>
</dbReference>
<feature type="chain" id="PRO_0000383510" description="Probable 4-deoxy-4-formamido-L-arabinose-phosphoundecaprenol deformylase ArnD">
    <location>
        <begin position="1"/>
        <end position="296"/>
    </location>
</feature>
<feature type="domain" description="NodB homology" evidence="1">
    <location>
        <begin position="2"/>
        <end position="260"/>
    </location>
</feature>
<organism>
    <name type="scientific">Escherichia coli O7:K1 (strain IAI39 / ExPEC)</name>
    <dbReference type="NCBI Taxonomy" id="585057"/>
    <lineage>
        <taxon>Bacteria</taxon>
        <taxon>Pseudomonadati</taxon>
        <taxon>Pseudomonadota</taxon>
        <taxon>Gammaproteobacteria</taxon>
        <taxon>Enterobacterales</taxon>
        <taxon>Enterobacteriaceae</taxon>
        <taxon>Escherichia</taxon>
    </lineage>
</organism>
<sequence>MTKVGLRIDVDTFRGTREGVPRLLETLSKYNIQASIFFSVGPDNMGRHLWRLVKPQFLWKMLRSNAASLYGWDILLAGTAWPGKEIGHANADIIREAAKHHEVGLHAWDHHAWQAHSGNWDRQTMVDDIARGLRTLEEIIGQPVTCSAAAGWRADQQVIEAKEAFHLRYNSDCRGAMPFRPLLESGKPGTAQIPVTLPTWDEVIGRDVKAEDFNGWLLNRILRDKGTPVYTIHAEVEGCAYQHNFVDLLKRAAQEGVTFCPLSELLSETLPLGQVVRGNIAGREGWLGCQQIAGSR</sequence>
<protein>
    <recommendedName>
        <fullName evidence="1">Probable 4-deoxy-4-formamido-L-arabinose-phosphoundecaprenol deformylase ArnD</fullName>
        <ecNumber evidence="1">3.5.1.n3</ecNumber>
    </recommendedName>
</protein>
<proteinExistence type="inferred from homology"/>
<gene>
    <name evidence="1" type="primary">arnD</name>
    <name type="ordered locus">ECIAI39_2403</name>
</gene>